<dbReference type="PIR" id="JS0317">
    <property type="entry name" value="JS0317"/>
</dbReference>
<dbReference type="GO" id="GO:0005576">
    <property type="term" value="C:extracellular region"/>
    <property type="evidence" value="ECO:0007669"/>
    <property type="project" value="UniProtKB-SubCell"/>
</dbReference>
<dbReference type="GO" id="GO:0007218">
    <property type="term" value="P:neuropeptide signaling pathway"/>
    <property type="evidence" value="ECO:0007669"/>
    <property type="project" value="UniProtKB-KW"/>
</dbReference>
<dbReference type="InterPro" id="IPR013202">
    <property type="entry name" value="Kinin_peptide"/>
</dbReference>
<dbReference type="Pfam" id="PF08260">
    <property type="entry name" value="Kinin"/>
    <property type="match status" value="1"/>
</dbReference>
<reference key="1">
    <citation type="journal article" date="1987" name="Comp. Biochem. Physiol.">
        <title>Isolation, primary structure and synthesis of leucokinins VII and VIII: the final members of this new family of cephalomyotropic peptides isolated from head extracts of Leucophaea maderae.</title>
        <authorList>
            <person name="Holman G.M."/>
            <person name="Cook B.J."/>
            <person name="Nachman R.J."/>
        </authorList>
    </citation>
    <scope>PROTEIN SEQUENCE</scope>
    <scope>AMIDATION AT GLY-8</scope>
    <source>
        <tissue>Head</tissue>
    </source>
</reference>
<proteinExistence type="evidence at protein level"/>
<organism>
    <name type="scientific">Rhyparobia maderae</name>
    <name type="common">Madeira cockroach</name>
    <name type="synonym">Leucophaea maderae</name>
    <dbReference type="NCBI Taxonomy" id="36963"/>
    <lineage>
        <taxon>Eukaryota</taxon>
        <taxon>Metazoa</taxon>
        <taxon>Ecdysozoa</taxon>
        <taxon>Arthropoda</taxon>
        <taxon>Hexapoda</taxon>
        <taxon>Insecta</taxon>
        <taxon>Pterygota</taxon>
        <taxon>Neoptera</taxon>
        <taxon>Polyneoptera</taxon>
        <taxon>Dictyoptera</taxon>
        <taxon>Blattodea</taxon>
        <taxon>Blaberoidea</taxon>
        <taxon>Blaberidae</taxon>
        <taxon>Oxyhaloinae</taxon>
        <taxon>Rhyparobia</taxon>
    </lineage>
</organism>
<evidence type="ECO:0000269" key="1">
    <source ref="1"/>
</evidence>
<feature type="peptide" id="PRO_0000043452" description="Leucokinin-7">
    <location>
        <begin position="1"/>
        <end position="8"/>
    </location>
</feature>
<feature type="modified residue" description="Glycine amide" evidence="1">
    <location>
        <position position="8"/>
    </location>
</feature>
<protein>
    <recommendedName>
        <fullName>Leucokinin-7</fullName>
    </recommendedName>
    <alternativeName>
        <fullName>Leucokinin VII</fullName>
        <shortName>L-VII</shortName>
    </alternativeName>
</protein>
<sequence length="8" mass="866">DPAFSSWG</sequence>
<accession>P19989</accession>
<comment type="function">
    <text>This cephalomyotropic peptide stimulates contractile activity of cockroach protodeum (hindgut).</text>
</comment>
<comment type="subcellular location">
    <subcellularLocation>
        <location>Secreted</location>
    </subcellularLocation>
</comment>
<name>LCK7_RHYMA</name>
<keyword id="KW-0027">Amidation</keyword>
<keyword id="KW-0903">Direct protein sequencing</keyword>
<keyword id="KW-0527">Neuropeptide</keyword>
<keyword id="KW-0964">Secreted</keyword>